<dbReference type="GO" id="GO:0005576">
    <property type="term" value="C:extracellular region"/>
    <property type="evidence" value="ECO:0007669"/>
    <property type="project" value="UniProtKB-SubCell"/>
</dbReference>
<dbReference type="GO" id="GO:0090729">
    <property type="term" value="F:toxin activity"/>
    <property type="evidence" value="ECO:0007669"/>
    <property type="project" value="UniProtKB-KW"/>
</dbReference>
<dbReference type="GO" id="GO:0006952">
    <property type="term" value="P:defense response"/>
    <property type="evidence" value="ECO:0007669"/>
    <property type="project" value="UniProtKB-KW"/>
</dbReference>
<dbReference type="GO" id="GO:0042311">
    <property type="term" value="P:vasodilation"/>
    <property type="evidence" value="ECO:0007669"/>
    <property type="project" value="UniProtKB-KW"/>
</dbReference>
<keyword id="KW-0878">Amphibian defense peptide</keyword>
<keyword id="KW-0903">Direct protein sequencing</keyword>
<keyword id="KW-1213">G-protein coupled receptor impairing toxin</keyword>
<keyword id="KW-0964">Secreted</keyword>
<keyword id="KW-0800">Toxin</keyword>
<keyword id="KW-0838">Vasoactive</keyword>
<keyword id="KW-0840">Vasodilator</keyword>
<protein>
    <recommendedName>
        <fullName>Des-Arg9-[Val1,Thr6]-bradykinin</fullName>
        <shortName>Des-Arg-[Val1,Thr6]-bradykinin</shortName>
    </recommendedName>
</protein>
<evidence type="ECO:0000250" key="1"/>
<evidence type="ECO:0000269" key="2">
    <source>
    </source>
</evidence>
<evidence type="ECO:0000305" key="3"/>
<proteinExistence type="evidence at protein level"/>
<feature type="peptide" id="PRO_0000248463" description="Des-Arg9-[Val1,Thr6]-bradykinin" evidence="2">
    <location>
        <begin position="1"/>
        <end position="8"/>
    </location>
</feature>
<name>BRK2_PITHY</name>
<accession>P84892</accession>
<sequence length="8" mass="861">VPPGFTPF</sequence>
<comment type="function">
    <text evidence="1">Produces in vitro relaxation of rat arterial smooth muscle and constriction of intestinal smooth muscle (By similarity). May target bradykinin receptors (BDKRB).</text>
</comment>
<comment type="subcellular location">
    <subcellularLocation>
        <location>Secreted</location>
    </subcellularLocation>
</comment>
<comment type="tissue specificity">
    <text evidence="2">Expressed by the skin glands.</text>
</comment>
<comment type="mass spectrometry" mass="861.48" error="0.1" method="MALDI" evidence="2"/>
<comment type="similarity">
    <text evidence="3">Belongs to the bradykinin-related peptide family.</text>
</comment>
<reference evidence="3" key="1">
    <citation type="journal article" date="2006" name="Peptides">
        <title>Bradykinin-related peptides from Phyllomedusa hypochondrialis.</title>
        <authorList>
            <person name="Brand G.D."/>
            <person name="Krause F.C."/>
            <person name="Silva L.P."/>
            <person name="Leite J.R.S.A."/>
            <person name="Melo J.A.T."/>
            <person name="Prates M.V."/>
            <person name="Pesquero J.B."/>
            <person name="Santos E.L."/>
            <person name="Nakaie C.R."/>
            <person name="Costa-Neto C.M."/>
            <person name="Bloch C. Jr."/>
        </authorList>
    </citation>
    <scope>PROTEIN SEQUENCE</scope>
    <scope>MASS SPECTROMETRY</scope>
    <source>
        <tissue evidence="2">Skin secretion</tissue>
    </source>
</reference>
<organism>
    <name type="scientific">Pithecopus hypochondrialis</name>
    <name type="common">Orange-legged leaf frog</name>
    <name type="synonym">Phyllomedusa hypochondrialis</name>
    <dbReference type="NCBI Taxonomy" id="317381"/>
    <lineage>
        <taxon>Eukaryota</taxon>
        <taxon>Metazoa</taxon>
        <taxon>Chordata</taxon>
        <taxon>Craniata</taxon>
        <taxon>Vertebrata</taxon>
        <taxon>Euteleostomi</taxon>
        <taxon>Amphibia</taxon>
        <taxon>Batrachia</taxon>
        <taxon>Anura</taxon>
        <taxon>Neobatrachia</taxon>
        <taxon>Hyloidea</taxon>
        <taxon>Hylidae</taxon>
        <taxon>Phyllomedusinae</taxon>
        <taxon>Pithecopus</taxon>
    </lineage>
</organism>